<sequence>MTDNAPQLALRDVAARQLANATKTVPQLRTITPRWLVRLLHWTPVEAGIYRVNQVKDASQITVACSERDESELPETFVDYIDNPREYLLSAVNTVVDVHTRISDLYSNPHDQIREQLRLTIEIMKERQESELINSREYGLLNNVAPGQLVHTRNGAPTPDDLDELLIRVWKEPAFFLAHPQAIAAFGRECTRRGVPPATVSLFGSSFITWRGVPLIPSDKVPLENGKTKILLLRVGESRQGVVGLYQPNLPGEQGMGLSVRFMGINRKALASYLVSLYCSLAVLTDDALAVLDNVDVTQYHTYRYN</sequence>
<organism>
    <name type="scientific">Synechococcus elongatus (strain ATCC 33912 / PCC 7942 / FACHB-805)</name>
    <name type="common">Anacystis nidulans R2</name>
    <dbReference type="NCBI Taxonomy" id="1140"/>
    <lineage>
        <taxon>Bacteria</taxon>
        <taxon>Bacillati</taxon>
        <taxon>Cyanobacteriota</taxon>
        <taxon>Cyanophyceae</taxon>
        <taxon>Synechococcales</taxon>
        <taxon>Synechococcaceae</taxon>
        <taxon>Synechococcus</taxon>
    </lineage>
</organism>
<protein>
    <recommendedName>
        <fullName evidence="3">Type 2A encapsulin shell protein SrpI</fullName>
    </recommendedName>
</protein>
<reference key="1">
    <citation type="journal article" date="1995" name="Mol. Gen. Genet.">
        <title>Two enzymes together capable of cysteine biosynthesis are encoded on a cyanobacterial plasmid.</title>
        <authorList>
            <person name="Nicholson M.L."/>
            <person name="Gaasenbeek M."/>
            <person name="Laudenbach D.E."/>
        </authorList>
    </citation>
    <scope>NUCLEOTIDE SEQUENCE [GENOMIC DNA]</scope>
    <scope>INDUCTION</scope>
    <source>
        <strain>ATCC 33912 / PCC 7942 / FACHB-805</strain>
        <plasmid>pANL</plasmid>
    </source>
</reference>
<reference key="2">
    <citation type="submission" date="2004-05" db="EMBL/GenBank/DDBJ databases">
        <title>pANL, the large plasmid of Synechococcus elongatus PCC 7942.</title>
        <authorList>
            <person name="Holtman C.K."/>
            <person name="Chen Y."/>
            <person name="Sandoval P."/>
            <person name="Socias T."/>
            <person name="Mohler B.J."/>
            <person name="Youderian P."/>
            <person name="Golden S.S."/>
        </authorList>
    </citation>
    <scope>NUCLEOTIDE SEQUENCE [GENOMIC DNA]</scope>
    <source>
        <strain>ATCC 33912 / PCC 7942 / FACHB-805</strain>
        <plasmid>pANL</plasmid>
    </source>
</reference>
<reference key="3">
    <citation type="submission" date="2005-08" db="EMBL/GenBank/DDBJ databases">
        <title>Complete sequence of plasmid 1 of Synechococcus elongatus PCC 7942.</title>
        <authorList>
            <consortium name="US DOE Joint Genome Institute"/>
            <person name="Copeland A."/>
            <person name="Lucas S."/>
            <person name="Lapidus A."/>
            <person name="Barry K."/>
            <person name="Detter J.C."/>
            <person name="Glavina T."/>
            <person name="Hammon N."/>
            <person name="Israni S."/>
            <person name="Pitluck S."/>
            <person name="Schmutz J."/>
            <person name="Larimer F."/>
            <person name="Land M."/>
            <person name="Kyrpides N."/>
            <person name="Lykidis A."/>
            <person name="Golden S."/>
            <person name="Richardson P."/>
        </authorList>
    </citation>
    <scope>NUCLEOTIDE SEQUENCE [LARGE SCALE GENOMIC DNA]</scope>
    <source>
        <strain>ATCC 33912 / PCC 7942 / FACHB-805</strain>
        <plasmid>1</plasmid>
    </source>
</reference>
<reference key="4">
    <citation type="journal article" date="2021" name="Nat. Commun.">
        <title>Large-scale computational discovery and analysis of virus-derived microbial nanocompartments.</title>
        <authorList>
            <person name="Andreas M.P."/>
            <person name="Giessen T.W."/>
        </authorList>
    </citation>
    <scope>CLASSIFICATION</scope>
</reference>
<reference evidence="7 8" key="5">
    <citation type="journal article" date="2021" name="Elife">
        <title>Discovery and characterization of a novel family of prokaryotic nanocompartments involved in sulfur metabolism.</title>
        <authorList>
            <person name="Nichols R.J."/>
            <person name="LaFrance B."/>
            <person name="Phillips N.R."/>
            <person name="Radford D.R."/>
            <person name="Oltrogge L.M."/>
            <person name="Valentin-Alvarado L.E."/>
            <person name="Bischoff A.J."/>
            <person name="Nogales E."/>
            <person name="Savage D.F."/>
        </authorList>
    </citation>
    <scope>STRUCTURE BY ELECTRON MICROSCOPY (2.20 ANGSTROMS)</scope>
    <scope>FUNCTION</scope>
    <scope>SUBUNIT</scope>
    <scope>SUBCELLULAR LOCATION</scope>
    <scope>INDUCTION BY SULFUR STARVATION</scope>
    <scope>DOMAIN</scope>
    <scope>DISRUPTION PHENOTYPE</scope>
    <source>
        <strain>ATCC 33912 / PCC 7942 / FACHB-805</strain>
        <plasmid>pANL</plasmid>
    </source>
</reference>
<keyword id="KW-0002">3D-structure</keyword>
<keyword id="KW-1284">Encapsulin nanocompartment</keyword>
<keyword id="KW-0614">Plasmid</keyword>
<keyword id="KW-1185">Reference proteome</keyword>
<comment type="function">
    <text evidence="1 6">Shell component of a type 2A encapsulin nanocompartment. Expression in E.coli generates nanocompartments with an average diameter of 25 nm. They can be disassembled by treatment with 6M guanidine hydrochloride and reassembled with cargo. The nanocompartment is probably involved in sulfur metabolism (PubMed:33821786). Probably allows passage of cysteine into its interior; during growth in light the physiological pH is 8-8.4, about 30-54% of free cysteine (charge -1) would be able to pass through the shell (Probable).</text>
</comment>
<comment type="subunit">
    <text evidence="1">The 24.5 nm encapsulin nanocompartment is formed by 60 subunits; monomers form pentamers which assemble to form shells. There are 12 positively charged pores where the pentamers meet with a minimal pore diameter of 3.7 Angstroms as well 3-fold axis channels and dimer channels.</text>
</comment>
<comment type="subcellular location">
    <subcellularLocation>
        <location evidence="1">Encapsulin nanocompartment</location>
    </subcellularLocation>
    <text evidence="1">Unlike type 1 subfamily encapsulins, the nanocompartment has a raised protuberance around the 5-fold pores.</text>
</comment>
<comment type="induction">
    <text evidence="1 2">Transcriptionally induced in the absence of sulfur, requires CysR for transcription. Part of the srpG-srpH-srpI operon (PubMed:7603442). Present in when grown in sulfur-containing media, induced 7-fold after 48 hours of sulfur starvation (at protein level) (PubMed:33821786).</text>
</comment>
<comment type="domain">
    <text evidence="1">Has 4 domains; an N-terminal arm not found in the type 1 subfamily, a discontinuous peripheral domain (P), an elongated loop (E) and the discontinuous axial domain (A).</text>
</comment>
<comment type="disruption phenotype">
    <text evidence="1">No growth phenotype of a single sprI or double srpI-cyd deletion mutant in the presence or absence of sulfur.</text>
</comment>
<comment type="similarity">
    <text evidence="6">Belongs to the encapsulin family. Family 2A subfamily.</text>
</comment>
<feature type="chain" id="PRO_0000072194" description="Type 2A encapsulin shell protein SrpI">
    <location>
        <begin position="1"/>
        <end position="306"/>
    </location>
</feature>
<feature type="site" description="5-fold pore central residue" evidence="1">
    <location>
        <position position="192"/>
    </location>
</feature>
<feature type="site" description="5-fold pore central residue" evidence="1">
    <location>
        <position position="194"/>
    </location>
</feature>
<feature type="site" description="5-fold pore central residue" evidence="1">
    <location>
        <position position="196"/>
    </location>
</feature>
<feature type="site" description="May bind cargo" evidence="6">
    <location>
        <position position="262"/>
    </location>
</feature>
<feature type="site" description="May bind cargo" evidence="6">
    <location>
        <position position="273"/>
    </location>
</feature>
<feature type="site" description="5-fold pore central residue" evidence="1">
    <location>
        <position position="304"/>
    </location>
</feature>
<feature type="helix" evidence="9">
    <location>
        <begin position="12"/>
        <end position="15"/>
    </location>
</feature>
<feature type="helix" evidence="9">
    <location>
        <begin position="16"/>
        <end position="18"/>
    </location>
</feature>
<feature type="helix" evidence="9">
    <location>
        <begin position="35"/>
        <end position="39"/>
    </location>
</feature>
<feature type="strand" evidence="9">
    <location>
        <begin position="40"/>
        <end position="44"/>
    </location>
</feature>
<feature type="strand" evidence="9">
    <location>
        <begin position="48"/>
        <end position="52"/>
    </location>
</feature>
<feature type="strand" evidence="9">
    <location>
        <begin position="85"/>
        <end position="88"/>
    </location>
</feature>
<feature type="strand" evidence="9">
    <location>
        <begin position="90"/>
        <end position="99"/>
    </location>
</feature>
<feature type="helix" evidence="9">
    <location>
        <begin position="100"/>
        <end position="105"/>
    </location>
</feature>
<feature type="strand" evidence="9">
    <location>
        <begin position="108"/>
        <end position="110"/>
    </location>
</feature>
<feature type="helix" evidence="9">
    <location>
        <begin position="112"/>
        <end position="134"/>
    </location>
</feature>
<feature type="strand" evidence="9">
    <location>
        <begin position="136"/>
        <end position="138"/>
    </location>
</feature>
<feature type="turn" evidence="9">
    <location>
        <begin position="140"/>
        <end position="142"/>
    </location>
</feature>
<feature type="strand" evidence="9">
    <location>
        <begin position="149"/>
        <end position="151"/>
    </location>
</feature>
<feature type="strand" evidence="9">
    <location>
        <begin position="153"/>
        <end position="156"/>
    </location>
</feature>
<feature type="helix" evidence="9">
    <location>
        <begin position="159"/>
        <end position="168"/>
    </location>
</feature>
<feature type="strand" evidence="9">
    <location>
        <begin position="175"/>
        <end position="178"/>
    </location>
</feature>
<feature type="helix" evidence="9">
    <location>
        <begin position="180"/>
        <end position="192"/>
    </location>
</feature>
<feature type="strand" evidence="9">
    <location>
        <begin position="199"/>
        <end position="202"/>
    </location>
</feature>
<feature type="strand" evidence="9">
    <location>
        <begin position="205"/>
        <end position="210"/>
    </location>
</feature>
<feature type="strand" evidence="9">
    <location>
        <begin position="213"/>
        <end position="217"/>
    </location>
</feature>
<feature type="strand" evidence="10">
    <location>
        <begin position="224"/>
        <end position="226"/>
    </location>
</feature>
<feature type="strand" evidence="9">
    <location>
        <begin position="227"/>
        <end position="233"/>
    </location>
</feature>
<feature type="turn" evidence="9">
    <location>
        <begin position="237"/>
        <end position="240"/>
    </location>
</feature>
<feature type="strand" evidence="9">
    <location>
        <begin position="242"/>
        <end position="246"/>
    </location>
</feature>
<feature type="strand" evidence="9">
    <location>
        <begin position="253"/>
        <end position="255"/>
    </location>
</feature>
<feature type="strand" evidence="9">
    <location>
        <begin position="258"/>
        <end position="265"/>
    </location>
</feature>
<feature type="strand" evidence="9">
    <location>
        <begin position="269"/>
        <end position="285"/>
    </location>
</feature>
<feature type="helix" evidence="9">
    <location>
        <begin position="286"/>
        <end position="288"/>
    </location>
</feature>
<feature type="strand" evidence="9">
    <location>
        <begin position="289"/>
        <end position="296"/>
    </location>
</feature>
<geneLocation type="plasmid">
    <name>1</name>
</geneLocation>
<geneLocation type="plasmid">
    <name>pANL</name>
</geneLocation>
<name>ENCP2_SYNE7</name>
<proteinExistence type="evidence at protein level"/>
<gene>
    <name evidence="5" type="primary">enc</name>
    <name evidence="4" type="synonym">sprI</name>
    <name type="ordered locus">Synpcc7942_B2662</name>
    <name type="ORF">pANL38</name>
</gene>
<accession>Q55032</accession>
<accession>Q7BA86</accession>
<evidence type="ECO:0000269" key="1">
    <source>
    </source>
</evidence>
<evidence type="ECO:0000269" key="2">
    <source>
    </source>
</evidence>
<evidence type="ECO:0000303" key="3">
    <source>
    </source>
</evidence>
<evidence type="ECO:0000303" key="4">
    <source>
    </source>
</evidence>
<evidence type="ECO:0000305" key="5"/>
<evidence type="ECO:0000305" key="6">
    <source>
    </source>
</evidence>
<evidence type="ECO:0007744" key="7">
    <source>
        <dbReference type="PDB" id="6X8M"/>
    </source>
</evidence>
<evidence type="ECO:0007744" key="8">
    <source>
        <dbReference type="PDB" id="6X8T"/>
    </source>
</evidence>
<evidence type="ECO:0007829" key="9">
    <source>
        <dbReference type="PDB" id="6X8M"/>
    </source>
</evidence>
<evidence type="ECO:0007829" key="10">
    <source>
        <dbReference type="PDB" id="6X8T"/>
    </source>
</evidence>
<dbReference type="EMBL" id="U23436">
    <property type="protein sequence ID" value="AAA86727.1"/>
    <property type="molecule type" value="Genomic_DNA"/>
</dbReference>
<dbReference type="EMBL" id="AF441790">
    <property type="protein sequence ID" value="AAM81164.1"/>
    <property type="molecule type" value="Genomic_DNA"/>
</dbReference>
<dbReference type="EMBL" id="CP000101">
    <property type="protein sequence ID" value="ABB58691.1"/>
    <property type="molecule type" value="Genomic_DNA"/>
</dbReference>
<dbReference type="RefSeq" id="NP_665777.1">
    <property type="nucleotide sequence ID" value="NC_004073.2"/>
</dbReference>
<dbReference type="PDB" id="6X8M">
    <property type="method" value="EM"/>
    <property type="resolution" value="2.20 A"/>
    <property type="chains" value="A=1-306"/>
</dbReference>
<dbReference type="PDB" id="6X8T">
    <property type="method" value="EM"/>
    <property type="resolution" value="2.90 A"/>
    <property type="chains" value="A=1-306"/>
</dbReference>
<dbReference type="PDBsum" id="6X8M"/>
<dbReference type="PDBsum" id="6X8T"/>
<dbReference type="EMDB" id="EMD-16303"/>
<dbReference type="EMDB" id="EMD-22094"/>
<dbReference type="EMDB" id="EMD-22095"/>
<dbReference type="SMR" id="Q55032"/>
<dbReference type="TCDB" id="1.S.8.1.1">
    <property type="family name" value="the bacterial/archaeal nanocompartment encapsulin shell protein3 (banc-sp3) family"/>
</dbReference>
<dbReference type="PaxDb" id="1140-Synpcc7942_B2662"/>
<dbReference type="KEGG" id="syf:Synpcc7942_B2662"/>
<dbReference type="eggNOG" id="COG0664">
    <property type="taxonomic scope" value="Bacteria"/>
</dbReference>
<dbReference type="HOGENOM" id="CLU_089302_0_0_3"/>
<dbReference type="OrthoDB" id="181419at2"/>
<dbReference type="BioCyc" id="SYNEL:SYNPCC7942_B2662-MONOMER"/>
<dbReference type="Proteomes" id="UP000889800">
    <property type="component" value="Plasmid pANL"/>
</dbReference>
<dbReference type="GO" id="GO:0140737">
    <property type="term" value="C:encapsulin nanocompartment"/>
    <property type="evidence" value="ECO:0000314"/>
    <property type="project" value="UniProtKB"/>
</dbReference>
<dbReference type="InterPro" id="IPR049822">
    <property type="entry name" value="Encap_f2a"/>
</dbReference>
<dbReference type="InterPro" id="IPR045641">
    <property type="entry name" value="SrpI-like"/>
</dbReference>
<dbReference type="NCBIfam" id="NF041162">
    <property type="entry name" value="encap_f2a"/>
    <property type="match status" value="1"/>
</dbReference>
<dbReference type="Pfam" id="PF19307">
    <property type="entry name" value="SrpI-like"/>
    <property type="match status" value="1"/>
</dbReference>